<dbReference type="EC" id="2.3.1.74"/>
<dbReference type="EMBL" id="X68977">
    <property type="protein sequence ID" value="CAA48773.1"/>
    <property type="molecule type" value="mRNA"/>
</dbReference>
<dbReference type="PIR" id="S29556">
    <property type="entry name" value="S29556"/>
</dbReference>
<dbReference type="SMR" id="P30078"/>
<dbReference type="UniPathway" id="UPA00154"/>
<dbReference type="GO" id="GO:0016210">
    <property type="term" value="F:naringenin-chalcone synthase activity"/>
    <property type="evidence" value="ECO:0007669"/>
    <property type="project" value="UniProtKB-EC"/>
</dbReference>
<dbReference type="GO" id="GO:0009813">
    <property type="term" value="P:flavonoid biosynthetic process"/>
    <property type="evidence" value="ECO:0007669"/>
    <property type="project" value="UniProtKB-UniPathway"/>
</dbReference>
<dbReference type="GO" id="GO:0030639">
    <property type="term" value="P:polyketide biosynthetic process"/>
    <property type="evidence" value="ECO:0007669"/>
    <property type="project" value="TreeGrafter"/>
</dbReference>
<dbReference type="CDD" id="cd00831">
    <property type="entry name" value="CHS_like"/>
    <property type="match status" value="1"/>
</dbReference>
<dbReference type="FunFam" id="3.40.47.10:FF:000014">
    <property type="entry name" value="Chalcone synthase 1"/>
    <property type="match status" value="1"/>
</dbReference>
<dbReference type="Gene3D" id="3.40.47.10">
    <property type="match status" value="2"/>
</dbReference>
<dbReference type="InterPro" id="IPR012328">
    <property type="entry name" value="Chalcone/stilbene_synt_C"/>
</dbReference>
<dbReference type="InterPro" id="IPR001099">
    <property type="entry name" value="Chalcone/stilbene_synt_N"/>
</dbReference>
<dbReference type="InterPro" id="IPR011141">
    <property type="entry name" value="Polyketide_synthase_type-III"/>
</dbReference>
<dbReference type="InterPro" id="IPR016039">
    <property type="entry name" value="Thiolase-like"/>
</dbReference>
<dbReference type="PANTHER" id="PTHR11877:SF80">
    <property type="entry name" value="CHALCONE SYNTHASE 1"/>
    <property type="match status" value="1"/>
</dbReference>
<dbReference type="PANTHER" id="PTHR11877">
    <property type="entry name" value="HYDROXYMETHYLGLUTARYL-COA SYNTHASE"/>
    <property type="match status" value="1"/>
</dbReference>
<dbReference type="Pfam" id="PF02797">
    <property type="entry name" value="Chal_sti_synt_C"/>
    <property type="match status" value="1"/>
</dbReference>
<dbReference type="Pfam" id="PF00195">
    <property type="entry name" value="Chal_sti_synt_N"/>
    <property type="match status" value="1"/>
</dbReference>
<dbReference type="SUPFAM" id="SSF53901">
    <property type="entry name" value="Thiolase-like"/>
    <property type="match status" value="2"/>
</dbReference>
<gene>
    <name type="primary">CHS</name>
</gene>
<keyword id="KW-0012">Acyltransferase</keyword>
<keyword id="KW-0284">Flavonoid biosynthesis</keyword>
<keyword id="KW-0808">Transferase</keyword>
<proteinExistence type="evidence at transcript level"/>
<sequence>MMYQQGCFAGGTVLRLAKDLAENNKGARVLVVCSEITAVTFRGPSDTHLDSLVGQALFGDGAAAVIIGADPVPEVEKPLFELVSAAQTVLPDSDGAIDGHLREVGLTFHLLKDVPGLISKNIEKSLNEALKPIGISDWNSLFWIAHPGGPAILDQVEAKLALKPEKLEATRQVLSDYGNMSSACVLFILDEVRRKSAEKGLETTGEGLEWGVLFGFGPGLTVETVVLHSVAA</sequence>
<accession>P30078</accession>
<organism>
    <name type="scientific">Malus domestica</name>
    <name type="common">Apple</name>
    <name type="synonym">Pyrus malus</name>
    <dbReference type="NCBI Taxonomy" id="3750"/>
    <lineage>
        <taxon>Eukaryota</taxon>
        <taxon>Viridiplantae</taxon>
        <taxon>Streptophyta</taxon>
        <taxon>Embryophyta</taxon>
        <taxon>Tracheophyta</taxon>
        <taxon>Spermatophyta</taxon>
        <taxon>Magnoliopsida</taxon>
        <taxon>eudicotyledons</taxon>
        <taxon>Gunneridae</taxon>
        <taxon>Pentapetalae</taxon>
        <taxon>rosids</taxon>
        <taxon>fabids</taxon>
        <taxon>Rosales</taxon>
        <taxon>Rosaceae</taxon>
        <taxon>Amygdaloideae</taxon>
        <taxon>Maleae</taxon>
        <taxon>Malus</taxon>
    </lineage>
</organism>
<name>CHSY_MALDO</name>
<evidence type="ECO:0000255" key="1">
    <source>
        <dbReference type="PROSITE-ProRule" id="PRU10023"/>
    </source>
</evidence>
<evidence type="ECO:0000305" key="2"/>
<feature type="chain" id="PRO_0000216015" description="Chalcone synthase">
    <location>
        <begin position="1" status="less than"/>
        <end position="232"/>
    </location>
</feature>
<feature type="active site" evidence="1">
    <location>
        <position position="7"/>
    </location>
</feature>
<feature type="non-terminal residue">
    <location>
        <position position="1"/>
    </location>
</feature>
<comment type="function">
    <text>The primary product of this enzyme is 4,2',4',6'-tetrahydroxychalcone (also termed naringenin-chalcone or chalcone) which can under specific conditions spontaneously isomerize into naringenin.</text>
</comment>
<comment type="catalytic activity">
    <reaction evidence="1">
        <text>(E)-4-coumaroyl-CoA + 3 malonyl-CoA + 3 H(+) = 2',4,4',6'-tetrahydroxychalcone + 3 CO2 + 4 CoA</text>
        <dbReference type="Rhea" id="RHEA:11128"/>
        <dbReference type="ChEBI" id="CHEBI:15378"/>
        <dbReference type="ChEBI" id="CHEBI:15413"/>
        <dbReference type="ChEBI" id="CHEBI:16526"/>
        <dbReference type="ChEBI" id="CHEBI:57287"/>
        <dbReference type="ChEBI" id="CHEBI:57384"/>
        <dbReference type="ChEBI" id="CHEBI:85008"/>
        <dbReference type="EC" id="2.3.1.74"/>
    </reaction>
</comment>
<comment type="pathway">
    <text>Secondary metabolite biosynthesis; flavonoid biosynthesis.</text>
</comment>
<comment type="similarity">
    <text evidence="2">Belongs to the thiolase-like superfamily. Chalcone/stilbene synthases family.</text>
</comment>
<reference key="1">
    <citation type="submission" date="1992-08" db="EMBL/GenBank/DDBJ databases">
        <authorList>
            <person name="Podivinsky E."/>
            <person name="Bradley J.M."/>
            <person name="Davis K.M."/>
        </authorList>
    </citation>
    <scope>NUCLEOTIDE SEQUENCE [MRNA]</scope>
    <source>
        <tissue>Leaf</tissue>
    </source>
</reference>
<protein>
    <recommendedName>
        <fullName>Chalcone synthase</fullName>
        <ecNumber>2.3.1.74</ecNumber>
    </recommendedName>
    <alternativeName>
        <fullName>Naregenin-chalcone synthase</fullName>
    </alternativeName>
</protein>